<feature type="chain" id="PRO_0000373914" description="Protein arginine N-methyltransferase 7">
    <location>
        <begin position="1"/>
        <end position="690"/>
    </location>
</feature>
<feature type="domain" description="SAM-dependent MTase PRMT-type 1" evidence="1">
    <location>
        <begin position="14"/>
        <end position="357"/>
    </location>
</feature>
<feature type="domain" description="SAM-dependent MTase PRMT-type 2" evidence="1">
    <location>
        <begin position="366"/>
        <end position="690"/>
    </location>
</feature>
<feature type="sequence conflict" description="In Ref. 3; AAM29595." evidence="4" ref="3">
    <original>R</original>
    <variation>C</variation>
    <location>
        <position position="401"/>
    </location>
</feature>
<sequence>MSCFSHVMNPITGQNSWQERGDDYDYHLEVANAGFGDMLHDWERNQKYFAALRKTIAGMREAGREVHVLDIGTGTGILSMMALAAGADSVTACEAFLPMANCAEKILAANGAGDKVRLIRKRSTEIQVGEDMPRKANLLVAELLDTELIGEGAIGIYNHAHAELLTEDALCIPARARCYAQVAQSPLAAQWNSLKTIANLDGEPLLHPPEQLKSCQGEAALHDVQLSQLPSSAFRPLTDPVEIFQFDFQRKQEREKQRSQLLKLQSKQPGAAELVFYWWDIQLDDDGEILLSCAPYWAHPQLKELAAEKAKDHPLPNVVPWRDHWMQAIYYIPKPLQLLEAGKSFHLSCHHDEYSLWFDAREEAPTKSVRRHTCTCDLHMTYSRSRIGQLNQSPRNKRYLRYLEESIEAEKSNVLVLGNGCLLGLASSALGAASVLLHEPHRFSRRLIESIVKHNQLKNVQFLDKVEELEDSRLAALTHIFAEPYFLNAILPWDNFYFGTLLTKIKDRLPEGVKISPCSARIYALPVEFLDLHKIRAPVGSCEGFDLRLFDEMVERSAEQAVSLVEAQPLWEYPCRALSEPQEVLSVDFSNFGQEHSLKGSIELKHPRICNGVALWVDWQLVEDNSPRSIVSSGPSEPVVPGEFVKWDMFVRQGVHFPRRPKEAITHLEWSTVFKPLLGELTFSFGQKKL</sequence>
<gene>
    <name type="primary">Art7</name>
    <name type="ORF">CG9882</name>
</gene>
<evidence type="ECO:0000255" key="1">
    <source>
        <dbReference type="PROSITE-ProRule" id="PRU01015"/>
    </source>
</evidence>
<evidence type="ECO:0000269" key="2">
    <source>
    </source>
</evidence>
<evidence type="ECO:0000269" key="3">
    <source>
    </source>
</evidence>
<evidence type="ECO:0000305" key="4"/>
<accession>Q9W1V1</accession>
<accession>B5X512</accession>
<accession>Q8MYV1</accession>
<name>ANM7_DROME</name>
<keyword id="KW-0489">Methyltransferase</keyword>
<keyword id="KW-1185">Reference proteome</keyword>
<keyword id="KW-0677">Repeat</keyword>
<keyword id="KW-0949">S-adenosyl-L-methionine</keyword>
<keyword id="KW-0808">Transferase</keyword>
<dbReference type="EC" id="2.1.1.-"/>
<dbReference type="EMBL" id="AE013599">
    <property type="protein sequence ID" value="AAF46952.4"/>
    <property type="molecule type" value="Genomic_DNA"/>
</dbReference>
<dbReference type="EMBL" id="AY113590">
    <property type="protein sequence ID" value="AAM29595.1"/>
    <property type="status" value="ALT_INIT"/>
    <property type="molecule type" value="mRNA"/>
</dbReference>
<dbReference type="EMBL" id="BT046131">
    <property type="protein sequence ID" value="ACI46519.1"/>
    <property type="status" value="ALT_INIT"/>
    <property type="molecule type" value="mRNA"/>
</dbReference>
<dbReference type="RefSeq" id="NP_611753.4">
    <property type="nucleotide sequence ID" value="NM_137909.5"/>
</dbReference>
<dbReference type="SMR" id="Q9W1V1"/>
<dbReference type="BioGRID" id="63270">
    <property type="interactions" value="5"/>
</dbReference>
<dbReference type="FunCoup" id="Q9W1V1">
    <property type="interactions" value="2096"/>
</dbReference>
<dbReference type="IntAct" id="Q9W1V1">
    <property type="interactions" value="3"/>
</dbReference>
<dbReference type="STRING" id="7227.FBpp0113056"/>
<dbReference type="PaxDb" id="7227-FBpp0113056"/>
<dbReference type="DNASU" id="37664"/>
<dbReference type="EnsemblMetazoa" id="FBtr0114564">
    <property type="protein sequence ID" value="FBpp0113056"/>
    <property type="gene ID" value="FBgn0034817"/>
</dbReference>
<dbReference type="GeneID" id="37664"/>
<dbReference type="KEGG" id="dme:Dmel_CG9882"/>
<dbReference type="AGR" id="FB:FBgn0034817"/>
<dbReference type="CTD" id="37664"/>
<dbReference type="FlyBase" id="FBgn0034817">
    <property type="gene designation" value="Art7"/>
</dbReference>
<dbReference type="VEuPathDB" id="VectorBase:FBgn0034817"/>
<dbReference type="eggNOG" id="KOG1501">
    <property type="taxonomic scope" value="Eukaryota"/>
</dbReference>
<dbReference type="GeneTree" id="ENSGT00940000156879"/>
<dbReference type="HOGENOM" id="CLU_015180_0_0_1"/>
<dbReference type="InParanoid" id="Q9W1V1"/>
<dbReference type="OMA" id="CHHDEYS"/>
<dbReference type="OrthoDB" id="412876at2759"/>
<dbReference type="PhylomeDB" id="Q9W1V1"/>
<dbReference type="SignaLink" id="Q9W1V1"/>
<dbReference type="BioGRID-ORCS" id="37664">
    <property type="hits" value="0 hits in 1 CRISPR screen"/>
</dbReference>
<dbReference type="GenomeRNAi" id="37664"/>
<dbReference type="PRO" id="PR:Q9W1V1"/>
<dbReference type="Proteomes" id="UP000000803">
    <property type="component" value="Chromosome 2R"/>
</dbReference>
<dbReference type="Bgee" id="FBgn0034817">
    <property type="expression patterns" value="Expressed in germline cell (Drosophila) in post-embryonic organism and 32 other cell types or tissues"/>
</dbReference>
<dbReference type="GO" id="GO:0042054">
    <property type="term" value="F:histone methyltransferase activity"/>
    <property type="evidence" value="ECO:0000318"/>
    <property type="project" value="GO_Central"/>
</dbReference>
<dbReference type="GO" id="GO:0016274">
    <property type="term" value="F:protein-arginine N-methyltransferase activity"/>
    <property type="evidence" value="ECO:0000250"/>
    <property type="project" value="FlyBase"/>
</dbReference>
<dbReference type="GO" id="GO:0035243">
    <property type="term" value="F:protein-arginine omega-N symmetric methyltransferase activity"/>
    <property type="evidence" value="ECO:0000315"/>
    <property type="project" value="UniProtKB"/>
</dbReference>
<dbReference type="GO" id="GO:0006338">
    <property type="term" value="P:chromatin remodeling"/>
    <property type="evidence" value="ECO:0000318"/>
    <property type="project" value="GO_Central"/>
</dbReference>
<dbReference type="GO" id="GO:0018216">
    <property type="term" value="P:peptidyl-arginine methylation"/>
    <property type="evidence" value="ECO:0000315"/>
    <property type="project" value="UniProtKB"/>
</dbReference>
<dbReference type="GO" id="GO:0006355">
    <property type="term" value="P:regulation of DNA-templated transcription"/>
    <property type="evidence" value="ECO:0000318"/>
    <property type="project" value="GO_Central"/>
</dbReference>
<dbReference type="CDD" id="cd02440">
    <property type="entry name" value="AdoMet_MTases"/>
    <property type="match status" value="1"/>
</dbReference>
<dbReference type="FunFam" id="2.70.160.11:FF:000014">
    <property type="entry name" value="Protein arginine N-methyltransferase 7"/>
    <property type="match status" value="1"/>
</dbReference>
<dbReference type="FunFam" id="2.70.160.11:FF:000019">
    <property type="entry name" value="Protein arginine N-methyltransferase 7"/>
    <property type="match status" value="1"/>
</dbReference>
<dbReference type="FunFam" id="3.40.50.150:FF:000070">
    <property type="entry name" value="Protein arginine N-methyltransferase 7"/>
    <property type="match status" value="1"/>
</dbReference>
<dbReference type="FunFam" id="3.40.50.150:FF:000071">
    <property type="entry name" value="Protein arginine N-methyltransferase 7"/>
    <property type="match status" value="1"/>
</dbReference>
<dbReference type="Gene3D" id="2.70.160.11">
    <property type="entry name" value="Hnrnp arginine n-methyltransferase1"/>
    <property type="match status" value="2"/>
</dbReference>
<dbReference type="Gene3D" id="3.40.50.150">
    <property type="entry name" value="Vaccinia Virus protein VP39"/>
    <property type="match status" value="2"/>
</dbReference>
<dbReference type="InterPro" id="IPR025799">
    <property type="entry name" value="Arg_MeTrfase"/>
</dbReference>
<dbReference type="InterPro" id="IPR014644">
    <property type="entry name" value="MeTrfase_PRMT7"/>
</dbReference>
<dbReference type="InterPro" id="IPR055135">
    <property type="entry name" value="PRMT_dom"/>
</dbReference>
<dbReference type="InterPro" id="IPR029063">
    <property type="entry name" value="SAM-dependent_MTases_sf"/>
</dbReference>
<dbReference type="PANTHER" id="PTHR11006">
    <property type="entry name" value="PROTEIN ARGININE N-METHYLTRANSFERASE"/>
    <property type="match status" value="1"/>
</dbReference>
<dbReference type="PANTHER" id="PTHR11006:SF4">
    <property type="entry name" value="PROTEIN ARGININE N-METHYLTRANSFERASE 7"/>
    <property type="match status" value="1"/>
</dbReference>
<dbReference type="Pfam" id="PF06325">
    <property type="entry name" value="PrmA"/>
    <property type="match status" value="1"/>
</dbReference>
<dbReference type="Pfam" id="PF22528">
    <property type="entry name" value="PRMT_C"/>
    <property type="match status" value="1"/>
</dbReference>
<dbReference type="PIRSF" id="PIRSF036946">
    <property type="entry name" value="Arg_N-mtase"/>
    <property type="match status" value="1"/>
</dbReference>
<dbReference type="SUPFAM" id="SSF53335">
    <property type="entry name" value="S-adenosyl-L-methionine-dependent methyltransferases"/>
    <property type="match status" value="2"/>
</dbReference>
<dbReference type="PROSITE" id="PS51678">
    <property type="entry name" value="SAM_MT_PRMT"/>
    <property type="match status" value="2"/>
</dbReference>
<comment type="function">
    <text evidence="3">Essential arginine methyltransferase that can both catalyze the formation of omega-N monomethylarginine (MMA) and symmetrical dimethylarginine (sDMA). Specifically mediates the symmetrical dimethylation of arginine residues in the small nuclear ribonucleoproteins SmD1 and SmD3.</text>
</comment>
<comment type="tissue specificity">
    <text evidence="2">Expressed at low level in ovary.</text>
</comment>
<comment type="disruption phenotype">
    <text evidence="3">Death at pupal stage.</text>
</comment>
<comment type="similarity">
    <text evidence="1">Belongs to the class I-like SAM-binding methyltransferase superfamily. Protein arginine N-methyltransferase family. PRMT7 subfamily.</text>
</comment>
<comment type="sequence caution" evidence="4">
    <conflict type="erroneous initiation">
        <sequence resource="EMBL-CDS" id="AAM29595"/>
    </conflict>
</comment>
<comment type="sequence caution" evidence="4">
    <conflict type="erroneous initiation">
        <sequence resource="EMBL-CDS" id="ACI46519"/>
    </conflict>
</comment>
<protein>
    <recommendedName>
        <fullName>Protein arginine N-methyltransferase 7</fullName>
        <shortName>Dart7</shortName>
        <ecNumber>2.1.1.-</ecNumber>
    </recommendedName>
</protein>
<proteinExistence type="evidence at transcript level"/>
<reference key="1">
    <citation type="journal article" date="2000" name="Science">
        <title>The genome sequence of Drosophila melanogaster.</title>
        <authorList>
            <person name="Adams M.D."/>
            <person name="Celniker S.E."/>
            <person name="Holt R.A."/>
            <person name="Evans C.A."/>
            <person name="Gocayne J.D."/>
            <person name="Amanatides P.G."/>
            <person name="Scherer S.E."/>
            <person name="Li P.W."/>
            <person name="Hoskins R.A."/>
            <person name="Galle R.F."/>
            <person name="George R.A."/>
            <person name="Lewis S.E."/>
            <person name="Richards S."/>
            <person name="Ashburner M."/>
            <person name="Henderson S.N."/>
            <person name="Sutton G.G."/>
            <person name="Wortman J.R."/>
            <person name="Yandell M.D."/>
            <person name="Zhang Q."/>
            <person name="Chen L.X."/>
            <person name="Brandon R.C."/>
            <person name="Rogers Y.-H.C."/>
            <person name="Blazej R.G."/>
            <person name="Champe M."/>
            <person name="Pfeiffer B.D."/>
            <person name="Wan K.H."/>
            <person name="Doyle C."/>
            <person name="Baxter E.G."/>
            <person name="Helt G."/>
            <person name="Nelson C.R."/>
            <person name="Miklos G.L.G."/>
            <person name="Abril J.F."/>
            <person name="Agbayani A."/>
            <person name="An H.-J."/>
            <person name="Andrews-Pfannkoch C."/>
            <person name="Baldwin D."/>
            <person name="Ballew R.M."/>
            <person name="Basu A."/>
            <person name="Baxendale J."/>
            <person name="Bayraktaroglu L."/>
            <person name="Beasley E.M."/>
            <person name="Beeson K.Y."/>
            <person name="Benos P.V."/>
            <person name="Berman B.P."/>
            <person name="Bhandari D."/>
            <person name="Bolshakov S."/>
            <person name="Borkova D."/>
            <person name="Botchan M.R."/>
            <person name="Bouck J."/>
            <person name="Brokstein P."/>
            <person name="Brottier P."/>
            <person name="Burtis K.C."/>
            <person name="Busam D.A."/>
            <person name="Butler H."/>
            <person name="Cadieu E."/>
            <person name="Center A."/>
            <person name="Chandra I."/>
            <person name="Cherry J.M."/>
            <person name="Cawley S."/>
            <person name="Dahlke C."/>
            <person name="Davenport L.B."/>
            <person name="Davies P."/>
            <person name="de Pablos B."/>
            <person name="Delcher A."/>
            <person name="Deng Z."/>
            <person name="Mays A.D."/>
            <person name="Dew I."/>
            <person name="Dietz S.M."/>
            <person name="Dodson K."/>
            <person name="Doup L.E."/>
            <person name="Downes M."/>
            <person name="Dugan-Rocha S."/>
            <person name="Dunkov B.C."/>
            <person name="Dunn P."/>
            <person name="Durbin K.J."/>
            <person name="Evangelista C.C."/>
            <person name="Ferraz C."/>
            <person name="Ferriera S."/>
            <person name="Fleischmann W."/>
            <person name="Fosler C."/>
            <person name="Gabrielian A.E."/>
            <person name="Garg N.S."/>
            <person name="Gelbart W.M."/>
            <person name="Glasser K."/>
            <person name="Glodek A."/>
            <person name="Gong F."/>
            <person name="Gorrell J.H."/>
            <person name="Gu Z."/>
            <person name="Guan P."/>
            <person name="Harris M."/>
            <person name="Harris N.L."/>
            <person name="Harvey D.A."/>
            <person name="Heiman T.J."/>
            <person name="Hernandez J.R."/>
            <person name="Houck J."/>
            <person name="Hostin D."/>
            <person name="Houston K.A."/>
            <person name="Howland T.J."/>
            <person name="Wei M.-H."/>
            <person name="Ibegwam C."/>
            <person name="Jalali M."/>
            <person name="Kalush F."/>
            <person name="Karpen G.H."/>
            <person name="Ke Z."/>
            <person name="Kennison J.A."/>
            <person name="Ketchum K.A."/>
            <person name="Kimmel B.E."/>
            <person name="Kodira C.D."/>
            <person name="Kraft C.L."/>
            <person name="Kravitz S."/>
            <person name="Kulp D."/>
            <person name="Lai Z."/>
            <person name="Lasko P."/>
            <person name="Lei Y."/>
            <person name="Levitsky A.A."/>
            <person name="Li J.H."/>
            <person name="Li Z."/>
            <person name="Liang Y."/>
            <person name="Lin X."/>
            <person name="Liu X."/>
            <person name="Mattei B."/>
            <person name="McIntosh T.C."/>
            <person name="McLeod M.P."/>
            <person name="McPherson D."/>
            <person name="Merkulov G."/>
            <person name="Milshina N.V."/>
            <person name="Mobarry C."/>
            <person name="Morris J."/>
            <person name="Moshrefi A."/>
            <person name="Mount S.M."/>
            <person name="Moy M."/>
            <person name="Murphy B."/>
            <person name="Murphy L."/>
            <person name="Muzny D.M."/>
            <person name="Nelson D.L."/>
            <person name="Nelson D.R."/>
            <person name="Nelson K.A."/>
            <person name="Nixon K."/>
            <person name="Nusskern D.R."/>
            <person name="Pacleb J.M."/>
            <person name="Palazzolo M."/>
            <person name="Pittman G.S."/>
            <person name="Pan S."/>
            <person name="Pollard J."/>
            <person name="Puri V."/>
            <person name="Reese M.G."/>
            <person name="Reinert K."/>
            <person name="Remington K."/>
            <person name="Saunders R.D.C."/>
            <person name="Scheeler F."/>
            <person name="Shen H."/>
            <person name="Shue B.C."/>
            <person name="Siden-Kiamos I."/>
            <person name="Simpson M."/>
            <person name="Skupski M.P."/>
            <person name="Smith T.J."/>
            <person name="Spier E."/>
            <person name="Spradling A.C."/>
            <person name="Stapleton M."/>
            <person name="Strong R."/>
            <person name="Sun E."/>
            <person name="Svirskas R."/>
            <person name="Tector C."/>
            <person name="Turner R."/>
            <person name="Venter E."/>
            <person name="Wang A.H."/>
            <person name="Wang X."/>
            <person name="Wang Z.-Y."/>
            <person name="Wassarman D.A."/>
            <person name="Weinstock G.M."/>
            <person name="Weissenbach J."/>
            <person name="Williams S.M."/>
            <person name="Woodage T."/>
            <person name="Worley K.C."/>
            <person name="Wu D."/>
            <person name="Yang S."/>
            <person name="Yao Q.A."/>
            <person name="Ye J."/>
            <person name="Yeh R.-F."/>
            <person name="Zaveri J.S."/>
            <person name="Zhan M."/>
            <person name="Zhang G."/>
            <person name="Zhao Q."/>
            <person name="Zheng L."/>
            <person name="Zheng X.H."/>
            <person name="Zhong F.N."/>
            <person name="Zhong W."/>
            <person name="Zhou X."/>
            <person name="Zhu S.C."/>
            <person name="Zhu X."/>
            <person name="Smith H.O."/>
            <person name="Gibbs R.A."/>
            <person name="Myers E.W."/>
            <person name="Rubin G.M."/>
            <person name="Venter J.C."/>
        </authorList>
    </citation>
    <scope>NUCLEOTIDE SEQUENCE [LARGE SCALE GENOMIC DNA]</scope>
    <source>
        <strain>Berkeley</strain>
    </source>
</reference>
<reference key="2">
    <citation type="journal article" date="2002" name="Genome Biol.">
        <title>Annotation of the Drosophila melanogaster euchromatic genome: a systematic review.</title>
        <authorList>
            <person name="Misra S."/>
            <person name="Crosby M.A."/>
            <person name="Mungall C.J."/>
            <person name="Matthews B.B."/>
            <person name="Campbell K.S."/>
            <person name="Hradecky P."/>
            <person name="Huang Y."/>
            <person name="Kaminker J.S."/>
            <person name="Millburn G.H."/>
            <person name="Prochnik S.E."/>
            <person name="Smith C.D."/>
            <person name="Tupy J.L."/>
            <person name="Whitfield E.J."/>
            <person name="Bayraktaroglu L."/>
            <person name="Berman B.P."/>
            <person name="Bettencourt B.R."/>
            <person name="Celniker S.E."/>
            <person name="de Grey A.D.N.J."/>
            <person name="Drysdale R.A."/>
            <person name="Harris N.L."/>
            <person name="Richter J."/>
            <person name="Russo S."/>
            <person name="Schroeder A.J."/>
            <person name="Shu S.Q."/>
            <person name="Stapleton M."/>
            <person name="Yamada C."/>
            <person name="Ashburner M."/>
            <person name="Gelbart W.M."/>
            <person name="Rubin G.M."/>
            <person name="Lewis S.E."/>
        </authorList>
    </citation>
    <scope>GENOME REANNOTATION</scope>
    <source>
        <strain>Berkeley</strain>
    </source>
</reference>
<reference key="3">
    <citation type="journal article" date="2002" name="Genome Biol.">
        <title>A Drosophila full-length cDNA resource.</title>
        <authorList>
            <person name="Stapleton M."/>
            <person name="Carlson J.W."/>
            <person name="Brokstein P."/>
            <person name="Yu C."/>
            <person name="Champe M."/>
            <person name="George R.A."/>
            <person name="Guarin H."/>
            <person name="Kronmiller B."/>
            <person name="Pacleb J.M."/>
            <person name="Park S."/>
            <person name="Wan K.H."/>
            <person name="Rubin G.M."/>
            <person name="Celniker S.E."/>
        </authorList>
    </citation>
    <scope>NUCLEOTIDE SEQUENCE [LARGE SCALE MRNA]</scope>
    <source>
        <strain>Berkeley</strain>
        <tissue>Head</tissue>
    </source>
</reference>
<reference key="4">
    <citation type="submission" date="2008-10" db="EMBL/GenBank/DDBJ databases">
        <authorList>
            <person name="Carlson J.W."/>
            <person name="Booth B."/>
            <person name="Frise E."/>
            <person name="Park S."/>
            <person name="Wan K.H."/>
            <person name="Yu C."/>
            <person name="Celniker S.E."/>
        </authorList>
    </citation>
    <scope>NUCLEOTIDE SEQUENCE [LARGE SCALE MRNA]</scope>
    <source>
        <strain>Berkeley</strain>
    </source>
</reference>
<reference key="5">
    <citation type="journal article" date="2004" name="Biochem. J.">
        <title>Characterization of the Drosophila protein arginine methyltransferases DART1 and DART4.</title>
        <authorList>
            <person name="Boulanger M.-C."/>
            <person name="Miranda T.B."/>
            <person name="Clarke S."/>
            <person name="Di Fruscio M."/>
            <person name="Suter B."/>
            <person name="Lasko P."/>
            <person name="Richard S."/>
        </authorList>
    </citation>
    <scope>TISSUE SPECIFICITY</scope>
</reference>
<reference key="6">
    <citation type="journal article" date="2008" name="RNA">
        <title>Sm protein methylation is dispensable for snRNP assembly in Drosophila melanogaster.</title>
        <authorList>
            <person name="Gonsalvez G.B."/>
            <person name="Praveen K."/>
            <person name="Hicks A.J."/>
            <person name="Tian L."/>
            <person name="Matera A.G."/>
        </authorList>
    </citation>
    <scope>FUNCTION</scope>
    <scope>DISRUPTION PHENOTYPE</scope>
</reference>
<organism>
    <name type="scientific">Drosophila melanogaster</name>
    <name type="common">Fruit fly</name>
    <dbReference type="NCBI Taxonomy" id="7227"/>
    <lineage>
        <taxon>Eukaryota</taxon>
        <taxon>Metazoa</taxon>
        <taxon>Ecdysozoa</taxon>
        <taxon>Arthropoda</taxon>
        <taxon>Hexapoda</taxon>
        <taxon>Insecta</taxon>
        <taxon>Pterygota</taxon>
        <taxon>Neoptera</taxon>
        <taxon>Endopterygota</taxon>
        <taxon>Diptera</taxon>
        <taxon>Brachycera</taxon>
        <taxon>Muscomorpha</taxon>
        <taxon>Ephydroidea</taxon>
        <taxon>Drosophilidae</taxon>
        <taxon>Drosophila</taxon>
        <taxon>Sophophora</taxon>
    </lineage>
</organism>